<protein>
    <recommendedName>
        <fullName evidence="1">Imidazoleglycerol-phosphate dehydratase</fullName>
        <shortName evidence="1">IGPD</shortName>
        <ecNumber evidence="1">4.2.1.19</ecNumber>
    </recommendedName>
</protein>
<feature type="chain" id="PRO_1000202512" description="Imidazoleglycerol-phosphate dehydratase">
    <location>
        <begin position="1"/>
        <end position="195"/>
    </location>
</feature>
<dbReference type="EC" id="4.2.1.19" evidence="1"/>
<dbReference type="EMBL" id="CP001615">
    <property type="protein sequence ID" value="ACQ69019.1"/>
    <property type="molecule type" value="Genomic_DNA"/>
</dbReference>
<dbReference type="RefSeq" id="WP_012726138.1">
    <property type="nucleotide sequence ID" value="NC_012673.1"/>
</dbReference>
<dbReference type="SMR" id="C4L173"/>
<dbReference type="STRING" id="360911.EAT1b_0085"/>
<dbReference type="KEGG" id="eat:EAT1b_0085"/>
<dbReference type="eggNOG" id="COG0131">
    <property type="taxonomic scope" value="Bacteria"/>
</dbReference>
<dbReference type="HOGENOM" id="CLU_044308_3_0_9"/>
<dbReference type="OrthoDB" id="9790411at2"/>
<dbReference type="UniPathway" id="UPA00031">
    <property type="reaction ID" value="UER00011"/>
</dbReference>
<dbReference type="Proteomes" id="UP000000716">
    <property type="component" value="Chromosome"/>
</dbReference>
<dbReference type="GO" id="GO:0005737">
    <property type="term" value="C:cytoplasm"/>
    <property type="evidence" value="ECO:0007669"/>
    <property type="project" value="UniProtKB-SubCell"/>
</dbReference>
<dbReference type="GO" id="GO:0004424">
    <property type="term" value="F:imidazoleglycerol-phosphate dehydratase activity"/>
    <property type="evidence" value="ECO:0007669"/>
    <property type="project" value="UniProtKB-UniRule"/>
</dbReference>
<dbReference type="GO" id="GO:0000105">
    <property type="term" value="P:L-histidine biosynthetic process"/>
    <property type="evidence" value="ECO:0007669"/>
    <property type="project" value="UniProtKB-UniRule"/>
</dbReference>
<dbReference type="CDD" id="cd07914">
    <property type="entry name" value="IGPD"/>
    <property type="match status" value="1"/>
</dbReference>
<dbReference type="FunFam" id="3.30.230.40:FF:000001">
    <property type="entry name" value="Imidazoleglycerol-phosphate dehydratase HisB"/>
    <property type="match status" value="1"/>
</dbReference>
<dbReference type="FunFam" id="3.30.230.40:FF:000003">
    <property type="entry name" value="Imidazoleglycerol-phosphate dehydratase HisB"/>
    <property type="match status" value="1"/>
</dbReference>
<dbReference type="Gene3D" id="3.30.230.40">
    <property type="entry name" value="Imidazole glycerol phosphate dehydratase, domain 1"/>
    <property type="match status" value="2"/>
</dbReference>
<dbReference type="HAMAP" id="MF_00076">
    <property type="entry name" value="HisB"/>
    <property type="match status" value="1"/>
</dbReference>
<dbReference type="InterPro" id="IPR038494">
    <property type="entry name" value="IGPD_sf"/>
</dbReference>
<dbReference type="InterPro" id="IPR000807">
    <property type="entry name" value="ImidazoleglycerolP_deHydtase"/>
</dbReference>
<dbReference type="InterPro" id="IPR020565">
    <property type="entry name" value="ImidazoleglycerP_deHydtase_CS"/>
</dbReference>
<dbReference type="InterPro" id="IPR020568">
    <property type="entry name" value="Ribosomal_Su5_D2-typ_SF"/>
</dbReference>
<dbReference type="NCBIfam" id="NF002107">
    <property type="entry name" value="PRK00951.1-2"/>
    <property type="match status" value="1"/>
</dbReference>
<dbReference type="NCBIfam" id="NF002109">
    <property type="entry name" value="PRK00951.1-5"/>
    <property type="match status" value="1"/>
</dbReference>
<dbReference type="NCBIfam" id="NF002111">
    <property type="entry name" value="PRK00951.2-1"/>
    <property type="match status" value="1"/>
</dbReference>
<dbReference type="NCBIfam" id="NF002114">
    <property type="entry name" value="PRK00951.2-4"/>
    <property type="match status" value="1"/>
</dbReference>
<dbReference type="PANTHER" id="PTHR23133:SF2">
    <property type="entry name" value="IMIDAZOLEGLYCEROL-PHOSPHATE DEHYDRATASE"/>
    <property type="match status" value="1"/>
</dbReference>
<dbReference type="PANTHER" id="PTHR23133">
    <property type="entry name" value="IMIDAZOLEGLYCEROL-PHOSPHATE DEHYDRATASE HIS7"/>
    <property type="match status" value="1"/>
</dbReference>
<dbReference type="Pfam" id="PF00475">
    <property type="entry name" value="IGPD"/>
    <property type="match status" value="1"/>
</dbReference>
<dbReference type="SUPFAM" id="SSF54211">
    <property type="entry name" value="Ribosomal protein S5 domain 2-like"/>
    <property type="match status" value="2"/>
</dbReference>
<dbReference type="PROSITE" id="PS00954">
    <property type="entry name" value="IGP_DEHYDRATASE_1"/>
    <property type="match status" value="1"/>
</dbReference>
<dbReference type="PROSITE" id="PS00955">
    <property type="entry name" value="IGP_DEHYDRATASE_2"/>
    <property type="match status" value="1"/>
</dbReference>
<sequence>MRTAELKRETKETKIDIQLNLDGTGESSIQTGVGFFDHMLTLLAFHSQMDLHVKVEGDTWVDAHHTVEDVGIALGQLIVKSLGDKVGIRRYGSSYMPMDETLARAVIDVSGRPFLVYQADIRNPKLGDFDTELAEEFFRAVAMNGRLTLHLAVLYGSNSHHMIEGLFKAFGRALAEAVSSDGTNRLPSTKGWIEG</sequence>
<evidence type="ECO:0000255" key="1">
    <source>
        <dbReference type="HAMAP-Rule" id="MF_00076"/>
    </source>
</evidence>
<keyword id="KW-0028">Amino-acid biosynthesis</keyword>
<keyword id="KW-0963">Cytoplasm</keyword>
<keyword id="KW-0368">Histidine biosynthesis</keyword>
<keyword id="KW-0456">Lyase</keyword>
<gene>
    <name evidence="1" type="primary">hisB</name>
    <name type="ordered locus">EAT1b_0085</name>
</gene>
<proteinExistence type="inferred from homology"/>
<comment type="catalytic activity">
    <reaction evidence="1">
        <text>D-erythro-1-(imidazol-4-yl)glycerol 3-phosphate = 3-(imidazol-4-yl)-2-oxopropyl phosphate + H2O</text>
        <dbReference type="Rhea" id="RHEA:11040"/>
        <dbReference type="ChEBI" id="CHEBI:15377"/>
        <dbReference type="ChEBI" id="CHEBI:57766"/>
        <dbReference type="ChEBI" id="CHEBI:58278"/>
        <dbReference type="EC" id="4.2.1.19"/>
    </reaction>
</comment>
<comment type="pathway">
    <text evidence="1">Amino-acid biosynthesis; L-histidine biosynthesis; L-histidine from 5-phospho-alpha-D-ribose 1-diphosphate: step 6/9.</text>
</comment>
<comment type="subcellular location">
    <subcellularLocation>
        <location evidence="1">Cytoplasm</location>
    </subcellularLocation>
</comment>
<comment type="similarity">
    <text evidence="1">Belongs to the imidazoleglycerol-phosphate dehydratase family.</text>
</comment>
<reference key="1">
    <citation type="journal article" date="2011" name="J. Bacteriol.">
        <title>Complete genome sequence of the Thermophilic Bacterium Exiguobacterium sp. AT1b.</title>
        <authorList>
            <person name="Vishnivetskaya T.A."/>
            <person name="Lucas S."/>
            <person name="Copeland A."/>
            <person name="Lapidus A."/>
            <person name="Glavina del Rio T."/>
            <person name="Dalin E."/>
            <person name="Tice H."/>
            <person name="Bruce D.C."/>
            <person name="Goodwin L.A."/>
            <person name="Pitluck S."/>
            <person name="Saunders E."/>
            <person name="Brettin T."/>
            <person name="Detter C."/>
            <person name="Han C."/>
            <person name="Larimer F."/>
            <person name="Land M.L."/>
            <person name="Hauser L.J."/>
            <person name="Kyrpides N.C."/>
            <person name="Ovchinnikova G."/>
            <person name="Kathariou S."/>
            <person name="Ramaley R.F."/>
            <person name="Rodrigues D.F."/>
            <person name="Hendrix C."/>
            <person name="Richardson P."/>
            <person name="Tiedje J.M."/>
        </authorList>
    </citation>
    <scope>NUCLEOTIDE SEQUENCE [LARGE SCALE GENOMIC DNA]</scope>
    <source>
        <strain>ATCC BAA-1283 / AT1b</strain>
    </source>
</reference>
<accession>C4L173</accession>
<name>HIS7_EXISA</name>
<organism>
    <name type="scientific">Exiguobacterium sp. (strain ATCC BAA-1283 / AT1b)</name>
    <dbReference type="NCBI Taxonomy" id="360911"/>
    <lineage>
        <taxon>Bacteria</taxon>
        <taxon>Bacillati</taxon>
        <taxon>Bacillota</taxon>
        <taxon>Bacilli</taxon>
        <taxon>Bacillales</taxon>
        <taxon>Bacillales Family XII. Incertae Sedis</taxon>
        <taxon>Exiguobacterium</taxon>
    </lineage>
</organism>